<protein>
    <recommendedName>
        <fullName>Probable splicing factor, arginine/serine-rich 1</fullName>
    </recommendedName>
    <alternativeName>
        <fullName>CeSRp75</fullName>
    </alternativeName>
    <alternativeName>
        <fullName>RNA-binding protein srp-5</fullName>
    </alternativeName>
</protein>
<accession>Q23121</accession>
<accession>Q8I106</accession>
<accession>Q8I107</accession>
<evidence type="ECO:0000250" key="1">
    <source>
        <dbReference type="UniProtKB" id="Q9NEW6"/>
    </source>
</evidence>
<evidence type="ECO:0000255" key="2"/>
<evidence type="ECO:0000255" key="3">
    <source>
        <dbReference type="PROSITE-ProRule" id="PRU00176"/>
    </source>
</evidence>
<evidence type="ECO:0000256" key="4">
    <source>
        <dbReference type="SAM" id="MobiDB-lite"/>
    </source>
</evidence>
<evidence type="ECO:0000269" key="5">
    <source>
    </source>
</evidence>
<evidence type="ECO:0000269" key="6">
    <source>
    </source>
</evidence>
<evidence type="ECO:0000303" key="7">
    <source>
    </source>
</evidence>
<evidence type="ECO:0000303" key="8">
    <source>
    </source>
</evidence>
<evidence type="ECO:0000305" key="9"/>
<evidence type="ECO:0000312" key="10">
    <source>
        <dbReference type="EMBL" id="CAA91395.1"/>
    </source>
</evidence>
<sequence>MAARIYIGRLTSRVSEKDIEHFFRGYGQIRDVLLKNGFGFVEFDDKRDAEDAVHDLNGKELGGERVILDYSKPRGGGGDRGGFGGGGRGGARVSSYSGGGGGGRDRFDRYDRGPPRRESRYGRPYSTRHRVVVENLSSRISWQDLKDQVRRQGVEPTYAEAHKRPNEALLCFATPSDLKRCIEKCDGMDLNGRKIKMIDDSQAGRSRSRSNSRSRSRSRSRDRRRSRSRSSSRSKSRSRSPPKRSRRESKSKSRSRSRSRSADNRKSRSPSRSPKKVDRSPSPPRGSRSPSEKGSPRRSRSASPMDNGDGDN</sequence>
<proteinExistence type="inferred from homology"/>
<feature type="chain" id="PRO_0000081948" description="Probable splicing factor, arginine/serine-rich 1">
    <location>
        <begin position="1"/>
        <end position="312"/>
    </location>
</feature>
<feature type="domain" description="RRM 1" evidence="3">
    <location>
        <begin position="3"/>
        <end position="73"/>
    </location>
</feature>
<feature type="domain" description="RRM 2" evidence="3">
    <location>
        <begin position="129"/>
        <end position="202"/>
    </location>
</feature>
<feature type="region of interest" description="Disordered" evidence="4">
    <location>
        <begin position="69"/>
        <end position="125"/>
    </location>
</feature>
<feature type="region of interest" description="Disordered" evidence="4">
    <location>
        <begin position="196"/>
        <end position="312"/>
    </location>
</feature>
<feature type="compositionally biased region" description="Gly residues" evidence="4">
    <location>
        <begin position="74"/>
        <end position="90"/>
    </location>
</feature>
<feature type="compositionally biased region" description="Basic and acidic residues" evidence="4">
    <location>
        <begin position="103"/>
        <end position="121"/>
    </location>
</feature>
<feature type="compositionally biased region" description="Basic residues" evidence="4">
    <location>
        <begin position="206"/>
        <end position="259"/>
    </location>
</feature>
<feature type="splice variant" id="VSP_051628" description="In isoform c." evidence="8">
    <original>DLKDQVR</original>
    <variation>VCKTKRR</variation>
    <location>
        <begin position="144"/>
        <end position="150"/>
    </location>
</feature>
<feature type="splice variant" id="VSP_051626" description="In isoform b." evidence="8">
    <original>DLKDQ</original>
    <variation>QEKIV</variation>
    <location>
        <begin position="144"/>
        <end position="148"/>
    </location>
</feature>
<feature type="splice variant" id="VSP_051627" description="In isoform b." evidence="8">
    <location>
        <begin position="149"/>
        <end position="312"/>
    </location>
</feature>
<feature type="splice variant" id="VSP_051629" description="In isoform c." evidence="8">
    <location>
        <begin position="151"/>
        <end position="312"/>
    </location>
</feature>
<comment type="function">
    <text evidence="5 6">Plays a functionally redundant role in spermatogenesis and growth rate control.</text>
</comment>
<comment type="subcellular location">
    <subcellularLocation>
        <location evidence="6">Nucleus</location>
    </subcellularLocation>
</comment>
<comment type="alternative products">
    <event type="alternative splicing"/>
    <isoform>
        <id>Q23121-1</id>
        <name evidence="8">a</name>
        <sequence type="displayed"/>
    </isoform>
    <isoform>
        <id>Q23121-2</id>
        <name evidence="8">b</name>
        <sequence type="described" ref="VSP_051626 VSP_051627"/>
    </isoform>
    <isoform>
        <id>Q23121-3</id>
        <name evidence="8">c</name>
        <sequence type="described" ref="VSP_051628 VSP_051629"/>
    </isoform>
</comment>
<comment type="PTM">
    <text evidence="1">Extensively phosphorylated on serine residues in the RS domain.</text>
</comment>
<comment type="miscellaneous">
    <text>RNA-mediated interference (RNAi) of rsp-1 and rsp-2 result in reduced brood sizes and abnormal egg-laying behavior, and the presence of unusual vacuolated structures in some of the secondary spermatocytes, spermatids and spermatozoa.</text>
</comment>
<comment type="similarity">
    <text evidence="2">Belongs to the splicing factor SR family.</text>
</comment>
<reference evidence="10" key="1">
    <citation type="journal article" date="1998" name="Science">
        <title>Genome sequence of the nematode C. elegans: a platform for investigating biology.</title>
        <authorList>
            <consortium name="The C. elegans sequencing consortium"/>
        </authorList>
    </citation>
    <scope>NUCLEOTIDE SEQUENCE [LARGE SCALE GENOMIC DNA]</scope>
    <scope>ALTERNATIVE SPLICING</scope>
    <source>
        <strain evidence="10">Bristol N2</strain>
    </source>
</reference>
<reference evidence="9" key="2">
    <citation type="journal article" date="2000" name="EMBO J.">
        <title>Functional characterization of SR and SR-related genes in Caenorhabditis elegans.</title>
        <authorList>
            <person name="Longman D."/>
            <person name="Johnstone I.L."/>
            <person name="Caceres J.F."/>
        </authorList>
    </citation>
    <scope>IDENTIFICATION</scope>
    <scope>FUNCTION</scope>
</reference>
<reference evidence="9" key="3">
    <citation type="journal article" date="2000" name="Mech. Dev.">
        <title>Unique and redundant functions of SR proteins, a conserved family of splicing factors, in Caenorhabditis elegans development.</title>
        <authorList>
            <person name="Kawano T."/>
            <person name="Fujita M."/>
            <person name="Sakamoto H."/>
        </authorList>
    </citation>
    <scope>FUNCTION</scope>
    <scope>SUBCELLULAR LOCATION</scope>
</reference>
<gene>
    <name type="primary">rsp-1</name>
    <name evidence="7" type="synonym">srp-5</name>
    <name type="ORF">W02B12.3</name>
</gene>
<dbReference type="EMBL" id="Z66521">
    <property type="protein sequence ID" value="CAA91395.1"/>
    <property type="molecule type" value="Genomic_DNA"/>
</dbReference>
<dbReference type="EMBL" id="Z66521">
    <property type="protein sequence ID" value="CAD59159.1"/>
    <property type="molecule type" value="Genomic_DNA"/>
</dbReference>
<dbReference type="EMBL" id="Z66521">
    <property type="protein sequence ID" value="CAD59160.1"/>
    <property type="molecule type" value="Genomic_DNA"/>
</dbReference>
<dbReference type="PIR" id="T26085">
    <property type="entry name" value="T26085"/>
</dbReference>
<dbReference type="RefSeq" id="NP_001317731.1">
    <property type="nucleotide sequence ID" value="NM_001330960.1"/>
</dbReference>
<dbReference type="RefSeq" id="NP_001359656.1">
    <molecule id="Q23121-2"/>
    <property type="nucleotide sequence ID" value="NM_001373792.1"/>
</dbReference>
<dbReference type="RefSeq" id="NP_496442.1">
    <molecule id="Q23121-1"/>
    <property type="nucleotide sequence ID" value="NM_064041.5"/>
</dbReference>
<dbReference type="RefSeq" id="NP_871913.1">
    <property type="nucleotide sequence ID" value="NM_182113.6"/>
</dbReference>
<dbReference type="SMR" id="Q23121"/>
<dbReference type="BioGRID" id="40055">
    <property type="interactions" value="4"/>
</dbReference>
<dbReference type="FunCoup" id="Q23121">
    <property type="interactions" value="3228"/>
</dbReference>
<dbReference type="STRING" id="6239.W02B12.3a.1"/>
<dbReference type="iPTMnet" id="Q23121"/>
<dbReference type="PaxDb" id="6239-W02B12.3a"/>
<dbReference type="PeptideAtlas" id="Q23121"/>
<dbReference type="EnsemblMetazoa" id="W02B12.3a.1">
    <molecule id="Q23121-1"/>
    <property type="protein sequence ID" value="W02B12.3a.1"/>
    <property type="gene ID" value="WBGene00004698"/>
</dbReference>
<dbReference type="EnsemblMetazoa" id="W02B12.3b.1">
    <molecule id="Q23121-2"/>
    <property type="protein sequence ID" value="W02B12.3b.1"/>
    <property type="gene ID" value="WBGene00004698"/>
</dbReference>
<dbReference type="EnsemblMetazoa" id="W02B12.3b.2">
    <molecule id="Q23121-2"/>
    <property type="protein sequence ID" value="W02B12.3b.2"/>
    <property type="gene ID" value="WBGene00004698"/>
</dbReference>
<dbReference type="EnsemblMetazoa" id="W02B12.3b.3">
    <molecule id="Q23121-2"/>
    <property type="protein sequence ID" value="W02B12.3b.3"/>
    <property type="gene ID" value="WBGene00004698"/>
</dbReference>
<dbReference type="EnsemblMetazoa" id="W02B12.3c.1">
    <property type="protein sequence ID" value="W02B12.3c.1"/>
    <property type="gene ID" value="WBGene00004698"/>
</dbReference>
<dbReference type="GeneID" id="174748"/>
<dbReference type="KEGG" id="cel:CELE_W02B12.3"/>
<dbReference type="UCSC" id="W02B12.3a">
    <molecule id="Q23121-1"/>
    <property type="organism name" value="c. elegans"/>
</dbReference>
<dbReference type="AGR" id="WB:WBGene00004698"/>
<dbReference type="CTD" id="174748"/>
<dbReference type="WormBase" id="W02B12.3a">
    <molecule id="Q23121-1"/>
    <property type="protein sequence ID" value="CE03763"/>
    <property type="gene ID" value="WBGene00004698"/>
    <property type="gene designation" value="rsp-1"/>
</dbReference>
<dbReference type="WormBase" id="W02B12.3b">
    <molecule id="Q23121-2"/>
    <property type="protein sequence ID" value="CE32944"/>
    <property type="gene ID" value="WBGene00004698"/>
    <property type="gene designation" value="rsp-1"/>
</dbReference>
<dbReference type="WormBase" id="W02B12.3c">
    <property type="protein sequence ID" value="CE51629"/>
    <property type="gene ID" value="WBGene00004698"/>
    <property type="gene designation" value="rsp-1"/>
</dbReference>
<dbReference type="eggNOG" id="KOG0106">
    <property type="taxonomic scope" value="Eukaryota"/>
</dbReference>
<dbReference type="GeneTree" id="ENSGT00940000156213"/>
<dbReference type="HOGENOM" id="CLU_012062_34_2_1"/>
<dbReference type="InParanoid" id="Q23121"/>
<dbReference type="OMA" id="LTCERKI"/>
<dbReference type="OrthoDB" id="1099063at2759"/>
<dbReference type="PhylomeDB" id="Q23121"/>
<dbReference type="PRO" id="PR:Q23121"/>
<dbReference type="Proteomes" id="UP000001940">
    <property type="component" value="Chromosome II"/>
</dbReference>
<dbReference type="Bgee" id="WBGene00004698">
    <property type="expression patterns" value="Expressed in embryo and 4 other cell types or tissues"/>
</dbReference>
<dbReference type="GO" id="GO:0005634">
    <property type="term" value="C:nucleus"/>
    <property type="evidence" value="ECO:0000314"/>
    <property type="project" value="UniProtKB"/>
</dbReference>
<dbReference type="GO" id="GO:0003723">
    <property type="term" value="F:RNA binding"/>
    <property type="evidence" value="ECO:0000250"/>
    <property type="project" value="WormBase"/>
</dbReference>
<dbReference type="GO" id="GO:0030154">
    <property type="term" value="P:cell differentiation"/>
    <property type="evidence" value="ECO:0007669"/>
    <property type="project" value="UniProtKB-KW"/>
</dbReference>
<dbReference type="GO" id="GO:0008406">
    <property type="term" value="P:gonad development"/>
    <property type="evidence" value="ECO:0000316"/>
    <property type="project" value="UniProtKB"/>
</dbReference>
<dbReference type="GO" id="GO:0000398">
    <property type="term" value="P:mRNA splicing, via spliceosome"/>
    <property type="evidence" value="ECO:0000250"/>
    <property type="project" value="WormBase"/>
</dbReference>
<dbReference type="GO" id="GO:0040009">
    <property type="term" value="P:regulation of growth rate"/>
    <property type="evidence" value="ECO:0000316"/>
    <property type="project" value="UniProtKB"/>
</dbReference>
<dbReference type="GO" id="GO:0008380">
    <property type="term" value="P:RNA splicing"/>
    <property type="evidence" value="ECO:0000303"/>
    <property type="project" value="UniProtKB"/>
</dbReference>
<dbReference type="GO" id="GO:0007283">
    <property type="term" value="P:spermatogenesis"/>
    <property type="evidence" value="ECO:0000316"/>
    <property type="project" value="UniProtKB"/>
</dbReference>
<dbReference type="CDD" id="cd12337">
    <property type="entry name" value="RRM1_SRSF4_like"/>
    <property type="match status" value="1"/>
</dbReference>
<dbReference type="CDD" id="cd12339">
    <property type="entry name" value="RRM2_SRSF1_4_like"/>
    <property type="match status" value="1"/>
</dbReference>
<dbReference type="FunFam" id="3.30.70.330:FF:001670">
    <property type="match status" value="1"/>
</dbReference>
<dbReference type="Gene3D" id="3.30.70.330">
    <property type="match status" value="2"/>
</dbReference>
<dbReference type="InterPro" id="IPR012677">
    <property type="entry name" value="Nucleotide-bd_a/b_plait_sf"/>
</dbReference>
<dbReference type="InterPro" id="IPR035979">
    <property type="entry name" value="RBD_domain_sf"/>
</dbReference>
<dbReference type="InterPro" id="IPR000504">
    <property type="entry name" value="RRM_dom"/>
</dbReference>
<dbReference type="PANTHER" id="PTHR48038">
    <property type="entry name" value="RIBONUCLEOPROTEIN RB97D"/>
    <property type="match status" value="1"/>
</dbReference>
<dbReference type="PANTHER" id="PTHR48038:SF3">
    <property type="entry name" value="SPLICING FACTOR, ARGININE_SERINE-RICH 1-RELATED"/>
    <property type="match status" value="1"/>
</dbReference>
<dbReference type="Pfam" id="PF00076">
    <property type="entry name" value="RRM_1"/>
    <property type="match status" value="2"/>
</dbReference>
<dbReference type="SMART" id="SM00360">
    <property type="entry name" value="RRM"/>
    <property type="match status" value="2"/>
</dbReference>
<dbReference type="SUPFAM" id="SSF54928">
    <property type="entry name" value="RNA-binding domain, RBD"/>
    <property type="match status" value="1"/>
</dbReference>
<dbReference type="PROSITE" id="PS50102">
    <property type="entry name" value="RRM"/>
    <property type="match status" value="1"/>
</dbReference>
<name>RSP1_CAEEL</name>
<organism>
    <name type="scientific">Caenorhabditis elegans</name>
    <dbReference type="NCBI Taxonomy" id="6239"/>
    <lineage>
        <taxon>Eukaryota</taxon>
        <taxon>Metazoa</taxon>
        <taxon>Ecdysozoa</taxon>
        <taxon>Nematoda</taxon>
        <taxon>Chromadorea</taxon>
        <taxon>Rhabditida</taxon>
        <taxon>Rhabditina</taxon>
        <taxon>Rhabditomorpha</taxon>
        <taxon>Rhabditoidea</taxon>
        <taxon>Rhabditidae</taxon>
        <taxon>Peloderinae</taxon>
        <taxon>Caenorhabditis</taxon>
    </lineage>
</organism>
<keyword id="KW-0025">Alternative splicing</keyword>
<keyword id="KW-0217">Developmental protein</keyword>
<keyword id="KW-0221">Differentiation</keyword>
<keyword id="KW-0341">Growth regulation</keyword>
<keyword id="KW-0507">mRNA processing</keyword>
<keyword id="KW-0508">mRNA splicing</keyword>
<keyword id="KW-0539">Nucleus</keyword>
<keyword id="KW-0597">Phosphoprotein</keyword>
<keyword id="KW-1185">Reference proteome</keyword>
<keyword id="KW-0677">Repeat</keyword>
<keyword id="KW-0694">RNA-binding</keyword>
<keyword id="KW-0744">Spermatogenesis</keyword>